<comment type="function">
    <text evidence="1">Component of an export pathway for enterobactin.</text>
</comment>
<comment type="subcellular location">
    <subcellularLocation>
        <location evidence="1">Cell inner membrane</location>
        <topology evidence="1">Multi-pass membrane protein</topology>
    </subcellularLocation>
</comment>
<comment type="similarity">
    <text evidence="1">Belongs to the major facilitator superfamily. EntS (TC 2.A.1.38) family.</text>
</comment>
<keyword id="KW-0997">Cell inner membrane</keyword>
<keyword id="KW-1003">Cell membrane</keyword>
<keyword id="KW-0472">Membrane</keyword>
<keyword id="KW-0812">Transmembrane</keyword>
<keyword id="KW-1133">Transmembrane helix</keyword>
<keyword id="KW-0813">Transport</keyword>
<feature type="chain" id="PRO_1000145846" description="Enterobactin exporter EntS">
    <location>
        <begin position="1"/>
        <end position="416"/>
    </location>
</feature>
<feature type="topological domain" description="Cytoplasmic" evidence="1">
    <location>
        <begin position="1"/>
        <end position="21"/>
    </location>
</feature>
<feature type="transmembrane region" description="Helical" evidence="1">
    <location>
        <begin position="22"/>
        <end position="42"/>
    </location>
</feature>
<feature type="topological domain" description="Periplasmic" evidence="1">
    <location>
        <begin position="43"/>
        <end position="55"/>
    </location>
</feature>
<feature type="transmembrane region" description="Helical" evidence="1">
    <location>
        <begin position="56"/>
        <end position="76"/>
    </location>
</feature>
<feature type="topological domain" description="Cytoplasmic" evidence="1">
    <location>
        <begin position="77"/>
        <end position="83"/>
    </location>
</feature>
<feature type="transmembrane region" description="Helical" evidence="1">
    <location>
        <begin position="84"/>
        <end position="104"/>
    </location>
</feature>
<feature type="topological domain" description="Periplasmic" evidence="1">
    <location>
        <begin position="105"/>
        <end position="109"/>
    </location>
</feature>
<feature type="transmembrane region" description="Helical" evidence="1">
    <location>
        <begin position="110"/>
        <end position="130"/>
    </location>
</feature>
<feature type="topological domain" description="Cytoplasmic" evidence="1">
    <location>
        <begin position="131"/>
        <end position="156"/>
    </location>
</feature>
<feature type="transmembrane region" description="Helical" evidence="1">
    <location>
        <begin position="157"/>
        <end position="177"/>
    </location>
</feature>
<feature type="topological domain" description="Periplasmic" evidence="1">
    <location>
        <position position="178"/>
    </location>
</feature>
<feature type="transmembrane region" description="Helical" evidence="1">
    <location>
        <begin position="179"/>
        <end position="199"/>
    </location>
</feature>
<feature type="topological domain" description="Cytoplasmic" evidence="1">
    <location>
        <begin position="200"/>
        <end position="218"/>
    </location>
</feature>
<feature type="transmembrane region" description="Helical" evidence="1">
    <location>
        <begin position="219"/>
        <end position="239"/>
    </location>
</feature>
<feature type="topological domain" description="Periplasmic" evidence="1">
    <location>
        <begin position="240"/>
        <end position="256"/>
    </location>
</feature>
<feature type="transmembrane region" description="Helical" evidence="1">
    <location>
        <begin position="257"/>
        <end position="277"/>
    </location>
</feature>
<feature type="topological domain" description="Cytoplasmic" evidence="1">
    <location>
        <begin position="278"/>
        <end position="287"/>
    </location>
</feature>
<feature type="transmembrane region" description="Helical" evidence="1">
    <location>
        <begin position="288"/>
        <end position="307"/>
    </location>
</feature>
<feature type="topological domain" description="Periplasmic" evidence="1">
    <location>
        <begin position="308"/>
        <end position="313"/>
    </location>
</feature>
<feature type="transmembrane region" description="Helical" evidence="1">
    <location>
        <begin position="314"/>
        <end position="336"/>
    </location>
</feature>
<feature type="topological domain" description="Cytoplasmic" evidence="1">
    <location>
        <begin position="337"/>
        <end position="356"/>
    </location>
</feature>
<feature type="transmembrane region" description="Helical" evidence="1">
    <location>
        <begin position="357"/>
        <end position="377"/>
    </location>
</feature>
<feature type="topological domain" description="Periplasmic" evidence="1">
    <location>
        <position position="378"/>
    </location>
</feature>
<feature type="transmembrane region" description="Helical" evidence="1">
    <location>
        <begin position="379"/>
        <end position="399"/>
    </location>
</feature>
<feature type="topological domain" description="Cytoplasmic" evidence="1">
    <location>
        <begin position="400"/>
        <end position="416"/>
    </location>
</feature>
<gene>
    <name evidence="1" type="primary">entS</name>
    <name type="ordered locus">ECUMN_0685</name>
</gene>
<name>ENTS_ECOLU</name>
<reference key="1">
    <citation type="journal article" date="2009" name="PLoS Genet.">
        <title>Organised genome dynamics in the Escherichia coli species results in highly diverse adaptive paths.</title>
        <authorList>
            <person name="Touchon M."/>
            <person name="Hoede C."/>
            <person name="Tenaillon O."/>
            <person name="Barbe V."/>
            <person name="Baeriswyl S."/>
            <person name="Bidet P."/>
            <person name="Bingen E."/>
            <person name="Bonacorsi S."/>
            <person name="Bouchier C."/>
            <person name="Bouvet O."/>
            <person name="Calteau A."/>
            <person name="Chiapello H."/>
            <person name="Clermont O."/>
            <person name="Cruveiller S."/>
            <person name="Danchin A."/>
            <person name="Diard M."/>
            <person name="Dossat C."/>
            <person name="Karoui M.E."/>
            <person name="Frapy E."/>
            <person name="Garry L."/>
            <person name="Ghigo J.M."/>
            <person name="Gilles A.M."/>
            <person name="Johnson J."/>
            <person name="Le Bouguenec C."/>
            <person name="Lescat M."/>
            <person name="Mangenot S."/>
            <person name="Martinez-Jehanne V."/>
            <person name="Matic I."/>
            <person name="Nassif X."/>
            <person name="Oztas S."/>
            <person name="Petit M.A."/>
            <person name="Pichon C."/>
            <person name="Rouy Z."/>
            <person name="Ruf C.S."/>
            <person name="Schneider D."/>
            <person name="Tourret J."/>
            <person name="Vacherie B."/>
            <person name="Vallenet D."/>
            <person name="Medigue C."/>
            <person name="Rocha E.P.C."/>
            <person name="Denamur E."/>
        </authorList>
    </citation>
    <scope>NUCLEOTIDE SEQUENCE [LARGE SCALE GENOMIC DNA]</scope>
    <source>
        <strain>UMN026 / ExPEC</strain>
    </source>
</reference>
<protein>
    <recommendedName>
        <fullName evidence="1">Enterobactin exporter EntS</fullName>
    </recommendedName>
</protein>
<dbReference type="EMBL" id="CU928163">
    <property type="protein sequence ID" value="CAR11899.1"/>
    <property type="molecule type" value="Genomic_DNA"/>
</dbReference>
<dbReference type="RefSeq" id="WP_001041789.1">
    <property type="nucleotide sequence ID" value="NC_011751.1"/>
</dbReference>
<dbReference type="RefSeq" id="YP_002411445.1">
    <property type="nucleotide sequence ID" value="NC_011751.1"/>
</dbReference>
<dbReference type="SMR" id="B7N9J8"/>
<dbReference type="STRING" id="585056.ECUMN_0685"/>
<dbReference type="GeneID" id="93776895"/>
<dbReference type="KEGG" id="eum:ECUMN_0685"/>
<dbReference type="PATRIC" id="fig|585056.7.peg.882"/>
<dbReference type="HOGENOM" id="CLU_034180_11_0_6"/>
<dbReference type="Proteomes" id="UP000007097">
    <property type="component" value="Chromosome"/>
</dbReference>
<dbReference type="GO" id="GO:0005886">
    <property type="term" value="C:plasma membrane"/>
    <property type="evidence" value="ECO:0007669"/>
    <property type="project" value="UniProtKB-SubCell"/>
</dbReference>
<dbReference type="GO" id="GO:0042931">
    <property type="term" value="F:enterobactin transmembrane transporter activity"/>
    <property type="evidence" value="ECO:0007669"/>
    <property type="project" value="InterPro"/>
</dbReference>
<dbReference type="CDD" id="cd06173">
    <property type="entry name" value="MFS_MefA_like"/>
    <property type="match status" value="1"/>
</dbReference>
<dbReference type="FunFam" id="1.20.1250.20:FF:000056">
    <property type="entry name" value="Enterobactin exporter EntS"/>
    <property type="match status" value="1"/>
</dbReference>
<dbReference type="Gene3D" id="1.20.1250.20">
    <property type="entry name" value="MFS general substrate transporter like domains"/>
    <property type="match status" value="1"/>
</dbReference>
<dbReference type="HAMAP" id="MF_01436">
    <property type="entry name" value="MFS_EntS"/>
    <property type="match status" value="1"/>
</dbReference>
<dbReference type="InterPro" id="IPR023722">
    <property type="entry name" value="Enterobactin_exp_EntS"/>
</dbReference>
<dbReference type="InterPro" id="IPR020846">
    <property type="entry name" value="MFS_dom"/>
</dbReference>
<dbReference type="InterPro" id="IPR036259">
    <property type="entry name" value="MFS_trans_sf"/>
</dbReference>
<dbReference type="InterPro" id="IPR010290">
    <property type="entry name" value="TM_effector"/>
</dbReference>
<dbReference type="NCBIfam" id="NF007792">
    <property type="entry name" value="PRK10489.1"/>
    <property type="match status" value="1"/>
</dbReference>
<dbReference type="PANTHER" id="PTHR23513:SF9">
    <property type="entry name" value="ENTEROBACTIN EXPORTER ENTS"/>
    <property type="match status" value="1"/>
</dbReference>
<dbReference type="PANTHER" id="PTHR23513">
    <property type="entry name" value="INTEGRAL MEMBRANE EFFLUX PROTEIN-RELATED"/>
    <property type="match status" value="1"/>
</dbReference>
<dbReference type="Pfam" id="PF05977">
    <property type="entry name" value="MFS_3"/>
    <property type="match status" value="1"/>
</dbReference>
<dbReference type="SUPFAM" id="SSF103473">
    <property type="entry name" value="MFS general substrate transporter"/>
    <property type="match status" value="1"/>
</dbReference>
<dbReference type="PROSITE" id="PS50850">
    <property type="entry name" value="MFS"/>
    <property type="match status" value="1"/>
</dbReference>
<sequence length="416" mass="43301">MNKQSWLLNLSLLKTHPAFRAVFLARFISIVSLGLLGVAVPVQIQMMTHSTWQVGLSVTLTGGAMFVGLMVGGVLADRYERKKVILLARGTCGIGFIGLCLNALLPEPSLLAIYLLGLWDGFFASLGVTALLAATPALVGRENLMQAGAITMLTVRLGSVISPMIGGLLLATGGVAWNYGLAAAGTFITLLPLLSLPALPPPPQPREHPLKSLLAGFRFLLASPLVGGIALLGGLLTMASAVRVLYPALADNWQMSAAQIGFLYAAIPLGAAIGALTSGKLAHSARPGLLMLLSTLGSFLAIGLFGLMPMWILGVVCLALFGWLSAVSSLLQYTMLQTQTPEAMLGRINGLWTAQNVTGDAIGAALLGGLGAMMTPVASASASGFGLLIIGVLLLLVLVELRRFRQTPPQVTASDS</sequence>
<proteinExistence type="inferred from homology"/>
<organism>
    <name type="scientific">Escherichia coli O17:K52:H18 (strain UMN026 / ExPEC)</name>
    <dbReference type="NCBI Taxonomy" id="585056"/>
    <lineage>
        <taxon>Bacteria</taxon>
        <taxon>Pseudomonadati</taxon>
        <taxon>Pseudomonadota</taxon>
        <taxon>Gammaproteobacteria</taxon>
        <taxon>Enterobacterales</taxon>
        <taxon>Enterobacteriaceae</taxon>
        <taxon>Escherichia</taxon>
    </lineage>
</organism>
<accession>B7N9J8</accession>
<evidence type="ECO:0000255" key="1">
    <source>
        <dbReference type="HAMAP-Rule" id="MF_01436"/>
    </source>
</evidence>